<sequence>MKYTVDTHTHTVASTHAYSTIHDYLPIARARGIKLFATTDHGPDMADAPHFWHFVNLHVLPRVVDGVGILRGIEANIKNIDGEIDFPVRYESRLDMIMAGFHEPVFPPCDQATHTQAMINAIRSGRVDMISHPGNPAFPIDIQAVVKAAAQYRVALELNNSSFSHSRPGSENNCGAIVEAARDLGAYLTFGSDSHVAFSLGNFEHCHRLVTEAHFPEDRILARSPRALLDFLESRGRAHIPEFADL</sequence>
<accession>A4SKJ6</accession>
<proteinExistence type="inferred from homology"/>
<keyword id="KW-0378">Hydrolase</keyword>
<keyword id="KW-0479">Metal-binding</keyword>
<keyword id="KW-0862">Zinc</keyword>
<evidence type="ECO:0000255" key="1">
    <source>
        <dbReference type="HAMAP-Rule" id="MF_01561"/>
    </source>
</evidence>
<comment type="cofactor">
    <cofactor evidence="1">
        <name>Zn(2+)</name>
        <dbReference type="ChEBI" id="CHEBI:29105"/>
    </cofactor>
    <text evidence="1">Binds 3 Zn(2+) ions per subunit.</text>
</comment>
<comment type="similarity">
    <text evidence="1">Belongs to the PHP family.</text>
</comment>
<dbReference type="EC" id="3.1.3.-" evidence="1"/>
<dbReference type="EMBL" id="CP000644">
    <property type="protein sequence ID" value="ABO89418.1"/>
    <property type="molecule type" value="Genomic_DNA"/>
</dbReference>
<dbReference type="RefSeq" id="WP_005319380.1">
    <property type="nucleotide sequence ID" value="NC_009348.1"/>
</dbReference>
<dbReference type="SMR" id="A4SKJ6"/>
<dbReference type="STRING" id="29491.GCA_000820065_03246"/>
<dbReference type="KEGG" id="asa:ASA_1316"/>
<dbReference type="PATRIC" id="fig|382245.13.peg.1311"/>
<dbReference type="eggNOG" id="COG1387">
    <property type="taxonomic scope" value="Bacteria"/>
</dbReference>
<dbReference type="HOGENOM" id="CLU_061999_0_1_6"/>
<dbReference type="Proteomes" id="UP000000225">
    <property type="component" value="Chromosome"/>
</dbReference>
<dbReference type="GO" id="GO:0005829">
    <property type="term" value="C:cytosol"/>
    <property type="evidence" value="ECO:0007669"/>
    <property type="project" value="TreeGrafter"/>
</dbReference>
<dbReference type="GO" id="GO:0016791">
    <property type="term" value="F:phosphatase activity"/>
    <property type="evidence" value="ECO:0007669"/>
    <property type="project" value="UniProtKB-UniRule"/>
</dbReference>
<dbReference type="GO" id="GO:0008270">
    <property type="term" value="F:zinc ion binding"/>
    <property type="evidence" value="ECO:0007669"/>
    <property type="project" value="UniProtKB-UniRule"/>
</dbReference>
<dbReference type="GO" id="GO:0071978">
    <property type="term" value="P:bacterial-type flagellum-dependent swarming motility"/>
    <property type="evidence" value="ECO:0007669"/>
    <property type="project" value="TreeGrafter"/>
</dbReference>
<dbReference type="CDD" id="cd07437">
    <property type="entry name" value="PHP_HisPPase_Ycdx_like"/>
    <property type="match status" value="1"/>
</dbReference>
<dbReference type="FunFam" id="3.20.20.140:FF:000008">
    <property type="entry name" value="Probable phosphatase YcdX"/>
    <property type="match status" value="1"/>
</dbReference>
<dbReference type="Gene3D" id="3.20.20.140">
    <property type="entry name" value="Metal-dependent hydrolases"/>
    <property type="match status" value="1"/>
</dbReference>
<dbReference type="HAMAP" id="MF_01561">
    <property type="entry name" value="YcdX_phosphat"/>
    <property type="match status" value="1"/>
</dbReference>
<dbReference type="InterPro" id="IPR023710">
    <property type="entry name" value="Phosphatase_YcdX_put"/>
</dbReference>
<dbReference type="InterPro" id="IPR050243">
    <property type="entry name" value="PHP_phosphatase"/>
</dbReference>
<dbReference type="InterPro" id="IPR003141">
    <property type="entry name" value="Pol/His_phosphatase_N"/>
</dbReference>
<dbReference type="InterPro" id="IPR016195">
    <property type="entry name" value="Pol/histidinol_Pase-like"/>
</dbReference>
<dbReference type="NCBIfam" id="NF006702">
    <property type="entry name" value="PRK09248.1"/>
    <property type="match status" value="1"/>
</dbReference>
<dbReference type="PANTHER" id="PTHR36928">
    <property type="entry name" value="PHOSPHATASE YCDX-RELATED"/>
    <property type="match status" value="1"/>
</dbReference>
<dbReference type="PANTHER" id="PTHR36928:SF1">
    <property type="entry name" value="PHOSPHATASE YCDX-RELATED"/>
    <property type="match status" value="1"/>
</dbReference>
<dbReference type="SMART" id="SM00481">
    <property type="entry name" value="POLIIIAc"/>
    <property type="match status" value="1"/>
</dbReference>
<dbReference type="SUPFAM" id="SSF89550">
    <property type="entry name" value="PHP domain-like"/>
    <property type="match status" value="1"/>
</dbReference>
<feature type="chain" id="PRO_1000069009" description="Probable phosphatase ASA_1316">
    <location>
        <begin position="1"/>
        <end position="246"/>
    </location>
</feature>
<feature type="binding site" evidence="1">
    <location>
        <position position="8"/>
    </location>
    <ligand>
        <name>Zn(2+)</name>
        <dbReference type="ChEBI" id="CHEBI:29105"/>
        <label>1</label>
    </ligand>
</feature>
<feature type="binding site" evidence="1">
    <location>
        <position position="10"/>
    </location>
    <ligand>
        <name>Zn(2+)</name>
        <dbReference type="ChEBI" id="CHEBI:29105"/>
        <label>1</label>
    </ligand>
</feature>
<feature type="binding site" evidence="1">
    <location>
        <position position="16"/>
    </location>
    <ligand>
        <name>Zn(2+)</name>
        <dbReference type="ChEBI" id="CHEBI:29105"/>
        <label>2</label>
    </ligand>
</feature>
<feature type="binding site" evidence="1">
    <location>
        <position position="41"/>
    </location>
    <ligand>
        <name>Zn(2+)</name>
        <dbReference type="ChEBI" id="CHEBI:29105"/>
        <label>2</label>
    </ligand>
</feature>
<feature type="binding site" evidence="1">
    <location>
        <position position="74"/>
    </location>
    <ligand>
        <name>Zn(2+)</name>
        <dbReference type="ChEBI" id="CHEBI:29105"/>
        <label>1</label>
    </ligand>
</feature>
<feature type="binding site" evidence="1">
    <location>
        <position position="74"/>
    </location>
    <ligand>
        <name>Zn(2+)</name>
        <dbReference type="ChEBI" id="CHEBI:29105"/>
        <label>3</label>
    </ligand>
</feature>
<feature type="binding site" evidence="1">
    <location>
        <position position="102"/>
    </location>
    <ligand>
        <name>Zn(2+)</name>
        <dbReference type="ChEBI" id="CHEBI:29105"/>
        <label>3</label>
    </ligand>
</feature>
<feature type="binding site" evidence="1">
    <location>
        <position position="132"/>
    </location>
    <ligand>
        <name>Zn(2+)</name>
        <dbReference type="ChEBI" id="CHEBI:29105"/>
        <label>3</label>
    </ligand>
</feature>
<feature type="binding site" evidence="1">
    <location>
        <position position="193"/>
    </location>
    <ligand>
        <name>Zn(2+)</name>
        <dbReference type="ChEBI" id="CHEBI:29105"/>
        <label>1</label>
    </ligand>
</feature>
<feature type="binding site" evidence="1">
    <location>
        <position position="195"/>
    </location>
    <ligand>
        <name>Zn(2+)</name>
        <dbReference type="ChEBI" id="CHEBI:29105"/>
        <label>2</label>
    </ligand>
</feature>
<protein>
    <recommendedName>
        <fullName evidence="1">Probable phosphatase ASA_1316</fullName>
        <ecNumber evidence="1">3.1.3.-</ecNumber>
    </recommendedName>
</protein>
<reference key="1">
    <citation type="journal article" date="2008" name="BMC Genomics">
        <title>The genome of Aeromonas salmonicida subsp. salmonicida A449: insights into the evolution of a fish pathogen.</title>
        <authorList>
            <person name="Reith M.E."/>
            <person name="Singh R.K."/>
            <person name="Curtis B."/>
            <person name="Boyd J.M."/>
            <person name="Bouevitch A."/>
            <person name="Kimball J."/>
            <person name="Munholland J."/>
            <person name="Murphy C."/>
            <person name="Sarty D."/>
            <person name="Williams J."/>
            <person name="Nash J.H."/>
            <person name="Johnson S.C."/>
            <person name="Brown L.L."/>
        </authorList>
    </citation>
    <scope>NUCLEOTIDE SEQUENCE [LARGE SCALE GENOMIC DNA]</scope>
    <source>
        <strain>A449</strain>
    </source>
</reference>
<organism>
    <name type="scientific">Aeromonas salmonicida (strain A449)</name>
    <dbReference type="NCBI Taxonomy" id="382245"/>
    <lineage>
        <taxon>Bacteria</taxon>
        <taxon>Pseudomonadati</taxon>
        <taxon>Pseudomonadota</taxon>
        <taxon>Gammaproteobacteria</taxon>
        <taxon>Aeromonadales</taxon>
        <taxon>Aeromonadaceae</taxon>
        <taxon>Aeromonas</taxon>
    </lineage>
</organism>
<gene>
    <name type="ordered locus">ASA_1316</name>
</gene>
<name>Y1316_AERS4</name>